<sequence>MNSQPQARSPFFQRPQIQPPRAAIPNSSPSIRPGVQTPTAVYQANQHIMMVNHLPMPYPVTQGHQYCIPQYRHSGPPYVGPPQQYPVQPPGPGPFYPGPGPGDFANAYGTPFYPSQPVYQSAPIIVPTQQQPPPAKREKKTIRIRDPNQGGKDITEEIMSGGGSRNPTPPIGRPASTPTPPQQLPSQVPEHSPVVYGTVESAHLAASTPVTAASDQKQEEKPKPDPVFQSPSTVLRLVLSGEKKEQAGQMPETAAGEPTPEPPRTSSPTSLPPLARSSLPSPMSAALSSQPLFTAEDKCELPSSKEEDAPPVPSPTSCTAASGPSLTDNSDICKKPCSVAPHDSQLISSTILINEMNGVGEKLSAKENTVGMLRQEVLPLTLELEILEHPQEELKVECTPTPIAPSMLPAFSPAPPTPPTSPPCPPVVLSAAIARSPAVATEVQRVADEGESLRTCLSKDAKEMQDKAESESDGQAEETADPQSLHSGRSPAPVQTATTAPKSWKKTKEQTRTPDEVLEAEAEPKAEEELAVDSVLEPEQEKMSQGFPSERDPSALKRGKAEEGNGEEAEPVRNGAESASEGEGGDGNSGSADSSADGLTFPFKAESWKPADTEGKKQYDREFLLDIQFMPACIQKPEGLPPISDVVLDKINQPRLSMRTLDPRILPRGPDFTPAFADFPRQTPGGRGVPLLNVGPRRSQPGQRREPRKIITVSVKEDVHLRKAENAWKPSQKRDSHADDPESIKTQELFRKVRSILNKLTPQMFNQLMKQVSALTVDTEERLKGVIDLVFEKAIDEPSFSVAYANMCRCLVTLKVPMADKPGNTVNFRKLLLNRCQKEFEKDKADDDVFEKKQKELEAASAPEERTRLHDELEEAKDKARRRSIGNIKFIGELFKLKMLTEAIMHDCVVKLLKNHDEESLECLCRLLTTIGKDLDFEKAKPRMDQYFNQMEKIVKERKTSSRIRFMLQDVIDLRLCNWVSRRADQGPKTIEQIHKEAKIEEQEEQRKVQQLMTKEKRRPGVQRVDEGGWNTVQGAKNSRVLDPSKFLKITKPTIDEKIQLVPKAQLGSWGKGSSGGAKASESDALRSSASSLNRFSPLQPPAPSGSPSATPLEFDSRRALTSRGSMGREKSDKPIPAGTARPNTFLRGSSKDLLDNQSQEEQRREMLETVKQLTGGLDAERASTEADRSKTRELAKSEMCAVPAPDKPALSEEEVERKSKSIIDEFLHINDFKEATQCIEELSAQGPLHVFVKVGVEFTLERSQITRDHMGHLLYQLVQSEKLSKQDFFKGFSETLELADDMAIDIPHIWLYLAELVTPMLKEGGISMRELIVEFSKPLLPVGRAGVLLSEILHLLCRQMSHKKVGALWREADLSWKDFLPEGEDVHHFLLEQKLDFTESEGPCSSEALSKKELSAEELSQRLEKLIMEEKADDERIFDWVEANLDESQMSSPTFLRALMTAVCKAAIIADCSTFRVDTAVIKQRVPILLKYLDSDTEKELQALYALQASIVKLDQPANLLRMFFDCLYDEEVISEDAFYKWESSKDPAEQAGKGVALKSVTAFFTWLREAEEESEDN</sequence>
<feature type="chain" id="PRO_0000213330" description="Eukaryotic translation initiation factor 4 gamma 3">
    <location>
        <begin position="1"/>
        <end position="1579"/>
    </location>
</feature>
<feature type="repeat" description="HEAT 1">
    <location>
        <begin position="740"/>
        <end position="778"/>
    </location>
</feature>
<feature type="domain" description="MIF4G" evidence="5">
    <location>
        <begin position="750"/>
        <end position="978"/>
    </location>
</feature>
<feature type="repeat" description="HEAT 2">
    <location>
        <begin position="779"/>
        <end position="826"/>
    </location>
</feature>
<feature type="repeat" description="HEAT 3">
    <location>
        <begin position="827"/>
        <end position="900"/>
    </location>
</feature>
<feature type="repeat" description="HEAT 4">
    <location>
        <begin position="901"/>
        <end position="939"/>
    </location>
</feature>
<feature type="repeat" description="HEAT 5">
    <location>
        <begin position="940"/>
        <end position="979"/>
    </location>
</feature>
<feature type="domain" description="MI" evidence="5">
    <location>
        <begin position="1215"/>
        <end position="1337"/>
    </location>
</feature>
<feature type="domain" description="W2" evidence="4">
    <location>
        <begin position="1410"/>
        <end position="1579"/>
    </location>
</feature>
<feature type="region of interest" description="Disordered" evidence="6">
    <location>
        <begin position="1"/>
        <end position="35"/>
    </location>
</feature>
<feature type="region of interest" description="Disordered" evidence="6">
    <location>
        <begin position="128"/>
        <end position="326"/>
    </location>
</feature>
<feature type="region of interest" description="PABPC1-binding" evidence="2">
    <location>
        <begin position="134"/>
        <end position="162"/>
    </location>
</feature>
<feature type="region of interest" description="Disordered" evidence="6">
    <location>
        <begin position="454"/>
        <end position="615"/>
    </location>
</feature>
<feature type="region of interest" description="EIF4E-binding" evidence="2">
    <location>
        <begin position="614"/>
        <end position="625"/>
    </location>
</feature>
<feature type="region of interest" description="Disordered" evidence="6">
    <location>
        <begin position="681"/>
        <end position="706"/>
    </location>
</feature>
<feature type="region of interest" description="eIF3/EIF4A-binding" evidence="2">
    <location>
        <begin position="694"/>
        <end position="1014"/>
    </location>
</feature>
<feature type="region of interest" description="Disordered" evidence="6">
    <location>
        <begin position="724"/>
        <end position="744"/>
    </location>
</feature>
<feature type="region of interest" description="Disordered" evidence="6">
    <location>
        <begin position="855"/>
        <end position="875"/>
    </location>
</feature>
<feature type="region of interest" description="Disordered" evidence="6">
    <location>
        <begin position="1009"/>
        <end position="1037"/>
    </location>
</feature>
<feature type="region of interest" description="Disordered" evidence="6">
    <location>
        <begin position="1067"/>
        <end position="1214"/>
    </location>
</feature>
<feature type="region of interest" description="EIF4A-binding" evidence="2">
    <location>
        <begin position="1427"/>
        <end position="1579"/>
    </location>
</feature>
<feature type="region of interest" description="Necessary but not sufficient for MKNK1-binding" evidence="2">
    <location>
        <begin position="1565"/>
        <end position="1579"/>
    </location>
</feature>
<feature type="coiled-coil region" evidence="3">
    <location>
        <begin position="989"/>
        <end position="1018"/>
    </location>
</feature>
<feature type="coiled-coil region" evidence="3">
    <location>
        <begin position="1154"/>
        <end position="1176"/>
    </location>
</feature>
<feature type="coiled-coil region" evidence="3">
    <location>
        <begin position="1406"/>
        <end position="1438"/>
    </location>
</feature>
<feature type="compositionally biased region" description="Low complexity" evidence="6">
    <location>
        <begin position="10"/>
        <end position="25"/>
    </location>
</feature>
<feature type="compositionally biased region" description="Polar residues" evidence="6">
    <location>
        <begin position="26"/>
        <end position="35"/>
    </location>
</feature>
<feature type="compositionally biased region" description="Pro residues" evidence="6">
    <location>
        <begin position="167"/>
        <end position="183"/>
    </location>
</feature>
<feature type="compositionally biased region" description="Low complexity" evidence="6">
    <location>
        <begin position="266"/>
        <end position="292"/>
    </location>
</feature>
<feature type="compositionally biased region" description="Basic and acidic residues" evidence="6">
    <location>
        <begin position="295"/>
        <end position="308"/>
    </location>
</feature>
<feature type="compositionally biased region" description="Polar residues" evidence="6">
    <location>
        <begin position="315"/>
        <end position="326"/>
    </location>
</feature>
<feature type="compositionally biased region" description="Basic and acidic residues" evidence="6">
    <location>
        <begin position="454"/>
        <end position="470"/>
    </location>
</feature>
<feature type="compositionally biased region" description="Acidic residues" evidence="6">
    <location>
        <begin position="471"/>
        <end position="480"/>
    </location>
</feature>
<feature type="compositionally biased region" description="Polar residues" evidence="6">
    <location>
        <begin position="481"/>
        <end position="501"/>
    </location>
</feature>
<feature type="compositionally biased region" description="Basic and acidic residues" evidence="6">
    <location>
        <begin position="506"/>
        <end position="515"/>
    </location>
</feature>
<feature type="compositionally biased region" description="Basic and acidic residues" evidence="6">
    <location>
        <begin position="549"/>
        <end position="563"/>
    </location>
</feature>
<feature type="compositionally biased region" description="Low complexity" evidence="6">
    <location>
        <begin position="589"/>
        <end position="598"/>
    </location>
</feature>
<feature type="compositionally biased region" description="Basic and acidic residues" evidence="6">
    <location>
        <begin position="606"/>
        <end position="615"/>
    </location>
</feature>
<feature type="compositionally biased region" description="Basic and acidic residues" evidence="6">
    <location>
        <begin position="855"/>
        <end position="871"/>
    </location>
</feature>
<feature type="compositionally biased region" description="Low complexity" evidence="6">
    <location>
        <begin position="1086"/>
        <end position="1098"/>
    </location>
</feature>
<feature type="compositionally biased region" description="Basic and acidic residues" evidence="6">
    <location>
        <begin position="1150"/>
        <end position="1169"/>
    </location>
</feature>
<feature type="compositionally biased region" description="Basic and acidic residues" evidence="6">
    <location>
        <begin position="1179"/>
        <end position="1197"/>
    </location>
</feature>
<feature type="modified residue" description="Phosphothreonine" evidence="11">
    <location>
        <position position="168"/>
    </location>
</feature>
<feature type="modified residue" description="Phosphoserine" evidence="1">
    <location>
        <position position="230"/>
    </location>
</feature>
<feature type="modified residue" description="Phosphoserine" evidence="1">
    <location>
        <position position="232"/>
    </location>
</feature>
<feature type="modified residue" description="Phosphoserine" evidence="11 13">
    <location>
        <position position="267"/>
    </location>
</feature>
<feature type="modified residue" description="Phosphoserine" evidence="13">
    <location>
        <position position="436"/>
    </location>
</feature>
<feature type="modified residue" description="Phosphoserine" evidence="11 13">
    <location>
        <position position="470"/>
    </location>
</feature>
<feature type="modified residue" description="Phosphoserine" evidence="11 12 13">
    <location>
        <position position="472"/>
    </location>
</feature>
<feature type="modified residue" description="Phosphoserine" evidence="1">
    <location>
        <position position="490"/>
    </location>
</feature>
<feature type="modified residue" description="Phosphoserine; by CaMK1" evidence="1">
    <location>
        <position position="1150"/>
    </location>
</feature>
<feature type="modified residue" description="Phosphoserine" evidence="1">
    <location>
        <position position="1212"/>
    </location>
</feature>
<feature type="splice variant" id="VSP_026029" description="In isoform 4." evidence="8">
    <original>P</original>
    <variation>PFAAGPRPAHHQGGFRPIQ</variation>
    <location>
        <position position="10"/>
    </location>
</feature>
<feature type="splice variant" id="VSP_010490" description="In isoform 3." evidence="10">
    <original>F</original>
    <variation>FAAGPRPAHHQF</variation>
    <location>
        <position position="11"/>
    </location>
</feature>
<feature type="splice variant" id="VSP_010491" description="In isoform 2 and isoform 4." evidence="8 9">
    <location>
        <begin position="1084"/>
        <end position="1102"/>
    </location>
</feature>
<feature type="sequence conflict" description="In Ref. 2; CF743072." evidence="10" ref="2">
    <location>
        <position position="183"/>
    </location>
</feature>
<feature type="sequence conflict" description="In Ref. 2; CF743072." evidence="10" ref="2">
    <original>A</original>
    <variation>G</variation>
    <location>
        <position position="410"/>
    </location>
</feature>
<feature type="sequence conflict" description="In Ref. 2; CB522417." evidence="10" ref="2">
    <original>A</original>
    <variation>P</variation>
    <location>
        <position position="492"/>
    </location>
</feature>
<feature type="sequence conflict" description="In Ref. 1; BAC26452 and 3; AAH72600." evidence="10" ref="1 3">
    <original>E</original>
    <variation>G</variation>
    <location>
        <position position="1324"/>
    </location>
</feature>
<proteinExistence type="evidence at protein level"/>
<organism>
    <name type="scientific">Mus musculus</name>
    <name type="common">Mouse</name>
    <dbReference type="NCBI Taxonomy" id="10090"/>
    <lineage>
        <taxon>Eukaryota</taxon>
        <taxon>Metazoa</taxon>
        <taxon>Chordata</taxon>
        <taxon>Craniata</taxon>
        <taxon>Vertebrata</taxon>
        <taxon>Euteleostomi</taxon>
        <taxon>Mammalia</taxon>
        <taxon>Eutheria</taxon>
        <taxon>Euarchontoglires</taxon>
        <taxon>Glires</taxon>
        <taxon>Rodentia</taxon>
        <taxon>Myomorpha</taxon>
        <taxon>Muroidea</taxon>
        <taxon>Muridae</taxon>
        <taxon>Murinae</taxon>
        <taxon>Mus</taxon>
        <taxon>Mus</taxon>
    </lineage>
</organism>
<keyword id="KW-0025">Alternative splicing</keyword>
<keyword id="KW-0175">Coiled coil</keyword>
<keyword id="KW-0396">Initiation factor</keyword>
<keyword id="KW-0597">Phosphoprotein</keyword>
<keyword id="KW-0648">Protein biosynthesis</keyword>
<keyword id="KW-1185">Reference proteome</keyword>
<keyword id="KW-0677">Repeat</keyword>
<keyword id="KW-0694">RNA-binding</keyword>
<keyword id="KW-0810">Translation regulation</keyword>
<dbReference type="EMBL" id="AK029440">
    <property type="protein sequence ID" value="BAC26452.1"/>
    <property type="molecule type" value="mRNA"/>
</dbReference>
<dbReference type="EMBL" id="AK050887">
    <property type="protein sequence ID" value="BAC34445.1"/>
    <property type="molecule type" value="mRNA"/>
</dbReference>
<dbReference type="EMBL" id="AK054068">
    <property type="protein sequence ID" value="BAC35644.1"/>
    <property type="molecule type" value="mRNA"/>
</dbReference>
<dbReference type="EMBL" id="CB522417">
    <property type="status" value="NOT_ANNOTATED_CDS"/>
    <property type="molecule type" value="mRNA"/>
</dbReference>
<dbReference type="EMBL" id="CF743072">
    <property type="status" value="NOT_ANNOTATED_CDS"/>
    <property type="molecule type" value="mRNA"/>
</dbReference>
<dbReference type="EMBL" id="BC023898">
    <property type="protein sequence ID" value="AAH23898.1"/>
    <property type="status" value="ALT_INIT"/>
    <property type="molecule type" value="mRNA"/>
</dbReference>
<dbReference type="EMBL" id="BC047531">
    <property type="protein sequence ID" value="AAH47531.1"/>
    <property type="molecule type" value="mRNA"/>
</dbReference>
<dbReference type="EMBL" id="BC048848">
    <property type="protein sequence ID" value="AAH48848.1"/>
    <property type="molecule type" value="mRNA"/>
</dbReference>
<dbReference type="EMBL" id="BC057913">
    <property type="protein sequence ID" value="AAH57913.1"/>
    <property type="molecule type" value="mRNA"/>
</dbReference>
<dbReference type="EMBL" id="BC072600">
    <property type="protein sequence ID" value="AAH72600.1"/>
    <property type="molecule type" value="mRNA"/>
</dbReference>
<dbReference type="CCDS" id="CCDS38926.1">
    <molecule id="Q80XI3-4"/>
</dbReference>
<dbReference type="RefSeq" id="NP_766291.2">
    <property type="nucleotide sequence ID" value="NM_172703.3"/>
</dbReference>
<dbReference type="SMR" id="Q80XI3"/>
<dbReference type="BioGRID" id="231042">
    <property type="interactions" value="14"/>
</dbReference>
<dbReference type="ComplexPortal" id="CPX-5864">
    <property type="entry name" value="Eukaryotic translation initiation factor 4F, EIF4A2 and EIF4G3 variant"/>
</dbReference>
<dbReference type="ComplexPortal" id="CPX-5865">
    <property type="entry name" value="Eukaryotic translation initiation factor 4F, EIF4A1 and EIF4G3 variant"/>
</dbReference>
<dbReference type="CORUM" id="Q80XI3"/>
<dbReference type="FunCoup" id="Q80XI3">
    <property type="interactions" value="2187"/>
</dbReference>
<dbReference type="IntAct" id="Q80XI3">
    <property type="interactions" value="2"/>
</dbReference>
<dbReference type="STRING" id="10090.ENSMUSP00000081232"/>
<dbReference type="GlyGen" id="Q80XI3">
    <property type="glycosylation" value="4 sites, 1 O-linked glycan (1 site)"/>
</dbReference>
<dbReference type="iPTMnet" id="Q80XI3"/>
<dbReference type="PhosphoSitePlus" id="Q80XI3"/>
<dbReference type="SwissPalm" id="Q80XI3"/>
<dbReference type="jPOST" id="Q80XI3"/>
<dbReference type="PaxDb" id="10090-ENSMUSP00000081233"/>
<dbReference type="PeptideAtlas" id="Q80XI3"/>
<dbReference type="ProteomicsDB" id="267100">
    <molecule id="Q80XI3-1"/>
</dbReference>
<dbReference type="ProteomicsDB" id="267101">
    <molecule id="Q80XI3-2"/>
</dbReference>
<dbReference type="ProteomicsDB" id="267102">
    <molecule id="Q80XI3-3"/>
</dbReference>
<dbReference type="ProteomicsDB" id="267103">
    <molecule id="Q80XI3-4"/>
</dbReference>
<dbReference type="Pumba" id="Q80XI3"/>
<dbReference type="DNASU" id="230861"/>
<dbReference type="GeneID" id="230861"/>
<dbReference type="KEGG" id="mmu:230861"/>
<dbReference type="UCSC" id="uc008vka.2">
    <molecule id="Q80XI3-4"/>
    <property type="organism name" value="mouse"/>
</dbReference>
<dbReference type="UCSC" id="uc008vkb.2">
    <molecule id="Q80XI3-2"/>
    <property type="organism name" value="mouse"/>
</dbReference>
<dbReference type="AGR" id="MGI:1923935"/>
<dbReference type="CTD" id="8672"/>
<dbReference type="MGI" id="MGI:1923935">
    <property type="gene designation" value="Eif4g3"/>
</dbReference>
<dbReference type="eggNOG" id="KOG0401">
    <property type="taxonomic scope" value="Eukaryota"/>
</dbReference>
<dbReference type="InParanoid" id="Q80XI3"/>
<dbReference type="PhylomeDB" id="Q80XI3"/>
<dbReference type="Reactome" id="R-MMU-1169408">
    <property type="pathway name" value="ISG15 antiviral mechanism"/>
</dbReference>
<dbReference type="BioGRID-ORCS" id="230861">
    <property type="hits" value="3 hits in 79 CRISPR screens"/>
</dbReference>
<dbReference type="ChiTaRS" id="Eif4g3">
    <property type="organism name" value="mouse"/>
</dbReference>
<dbReference type="PRO" id="PR:Q80XI3"/>
<dbReference type="Proteomes" id="UP000000589">
    <property type="component" value="Unplaced"/>
</dbReference>
<dbReference type="RNAct" id="Q80XI3">
    <property type="molecule type" value="protein"/>
</dbReference>
<dbReference type="GO" id="GO:0016281">
    <property type="term" value="C:eukaryotic translation initiation factor 4F complex"/>
    <property type="evidence" value="ECO:0000303"/>
    <property type="project" value="ComplexPortal"/>
</dbReference>
<dbReference type="GO" id="GO:0043232">
    <property type="term" value="C:intracellular membraneless organelle"/>
    <property type="evidence" value="ECO:0000314"/>
    <property type="project" value="UniProt"/>
</dbReference>
<dbReference type="GO" id="GO:0045202">
    <property type="term" value="C:synapse"/>
    <property type="evidence" value="ECO:0000314"/>
    <property type="project" value="SynGO"/>
</dbReference>
<dbReference type="GO" id="GO:0003723">
    <property type="term" value="F:RNA binding"/>
    <property type="evidence" value="ECO:0007669"/>
    <property type="project" value="UniProtKB-KW"/>
</dbReference>
<dbReference type="GO" id="GO:0003743">
    <property type="term" value="F:translation initiation factor activity"/>
    <property type="evidence" value="ECO:0000314"/>
    <property type="project" value="UniProt"/>
</dbReference>
<dbReference type="GO" id="GO:0060903">
    <property type="term" value="P:positive regulation of meiosis I"/>
    <property type="evidence" value="ECO:0000315"/>
    <property type="project" value="MGI"/>
</dbReference>
<dbReference type="GO" id="GO:0045727">
    <property type="term" value="P:positive regulation of translation"/>
    <property type="evidence" value="ECO:0000314"/>
    <property type="project" value="UniProt"/>
</dbReference>
<dbReference type="GO" id="GO:0007286">
    <property type="term" value="P:spermatid development"/>
    <property type="evidence" value="ECO:0000314"/>
    <property type="project" value="UniProt"/>
</dbReference>
<dbReference type="GO" id="GO:0007283">
    <property type="term" value="P:spermatogenesis"/>
    <property type="evidence" value="ECO:0000315"/>
    <property type="project" value="MGI"/>
</dbReference>
<dbReference type="GO" id="GO:0006412">
    <property type="term" value="P:translation"/>
    <property type="evidence" value="ECO:0000315"/>
    <property type="project" value="MGI"/>
</dbReference>
<dbReference type="GO" id="GO:0006413">
    <property type="term" value="P:translational initiation"/>
    <property type="evidence" value="ECO:0000303"/>
    <property type="project" value="ComplexPortal"/>
</dbReference>
<dbReference type="CDD" id="cd11559">
    <property type="entry name" value="W2_eIF4G1_like"/>
    <property type="match status" value="1"/>
</dbReference>
<dbReference type="FunFam" id="1.25.40.180:FF:000001">
    <property type="entry name" value="Eukaryotic translation initiation factor 4 gamma, 3, putative"/>
    <property type="match status" value="1"/>
</dbReference>
<dbReference type="FunFam" id="1.25.40.180:FF:000002">
    <property type="entry name" value="Eukaryotic translation initiation factor 4 gamma, 3, putative"/>
    <property type="match status" value="1"/>
</dbReference>
<dbReference type="FunFam" id="1.25.40.180:FF:000003">
    <property type="entry name" value="Putative eukaryotic translation initiation factor 4 gamma 1"/>
    <property type="match status" value="1"/>
</dbReference>
<dbReference type="Gene3D" id="1.25.40.180">
    <property type="match status" value="3"/>
</dbReference>
<dbReference type="InterPro" id="IPR016024">
    <property type="entry name" value="ARM-type_fold"/>
</dbReference>
<dbReference type="InterPro" id="IPR003891">
    <property type="entry name" value="Initiation_fac_eIF4g_MI"/>
</dbReference>
<dbReference type="InterPro" id="IPR003890">
    <property type="entry name" value="MIF4G-like_typ-3"/>
</dbReference>
<dbReference type="InterPro" id="IPR003307">
    <property type="entry name" value="W2_domain"/>
</dbReference>
<dbReference type="PANTHER" id="PTHR23253">
    <property type="entry name" value="EUKARYOTIC TRANSLATION INITIATION FACTOR 4 GAMMA"/>
    <property type="match status" value="1"/>
</dbReference>
<dbReference type="PANTHER" id="PTHR23253:SF23">
    <property type="entry name" value="EUKARYOTIC TRANSLATION INITIATION FACTOR 4 GAMMA 3"/>
    <property type="match status" value="1"/>
</dbReference>
<dbReference type="Pfam" id="PF02847">
    <property type="entry name" value="MA3"/>
    <property type="match status" value="1"/>
</dbReference>
<dbReference type="Pfam" id="PF02854">
    <property type="entry name" value="MIF4G"/>
    <property type="match status" value="1"/>
</dbReference>
<dbReference type="Pfam" id="PF02020">
    <property type="entry name" value="W2"/>
    <property type="match status" value="1"/>
</dbReference>
<dbReference type="SMART" id="SM00515">
    <property type="entry name" value="eIF5C"/>
    <property type="match status" value="1"/>
</dbReference>
<dbReference type="SMART" id="SM00544">
    <property type="entry name" value="MA3"/>
    <property type="match status" value="1"/>
</dbReference>
<dbReference type="SMART" id="SM00543">
    <property type="entry name" value="MIF4G"/>
    <property type="match status" value="1"/>
</dbReference>
<dbReference type="SUPFAM" id="SSF48371">
    <property type="entry name" value="ARM repeat"/>
    <property type="match status" value="3"/>
</dbReference>
<dbReference type="PROSITE" id="PS51366">
    <property type="entry name" value="MI"/>
    <property type="match status" value="1"/>
</dbReference>
<dbReference type="PROSITE" id="PS51363">
    <property type="entry name" value="W2"/>
    <property type="match status" value="1"/>
</dbReference>
<protein>
    <recommendedName>
        <fullName>Eukaryotic translation initiation factor 4 gamma 3</fullName>
        <shortName>eIF-4-gamma 3</shortName>
        <shortName>eIF-4G 3</shortName>
        <shortName>eIF4G 3</shortName>
    </recommendedName>
    <alternativeName>
        <fullName>eIF-4-gamma II</fullName>
        <shortName>eIF4GII</shortName>
    </alternativeName>
</protein>
<reference key="1">
    <citation type="journal article" date="2005" name="Science">
        <title>The transcriptional landscape of the mammalian genome.</title>
        <authorList>
            <person name="Carninci P."/>
            <person name="Kasukawa T."/>
            <person name="Katayama S."/>
            <person name="Gough J."/>
            <person name="Frith M.C."/>
            <person name="Maeda N."/>
            <person name="Oyama R."/>
            <person name="Ravasi T."/>
            <person name="Lenhard B."/>
            <person name="Wells C."/>
            <person name="Kodzius R."/>
            <person name="Shimokawa K."/>
            <person name="Bajic V.B."/>
            <person name="Brenner S.E."/>
            <person name="Batalov S."/>
            <person name="Forrest A.R."/>
            <person name="Zavolan M."/>
            <person name="Davis M.J."/>
            <person name="Wilming L.G."/>
            <person name="Aidinis V."/>
            <person name="Allen J.E."/>
            <person name="Ambesi-Impiombato A."/>
            <person name="Apweiler R."/>
            <person name="Aturaliya R.N."/>
            <person name="Bailey T.L."/>
            <person name="Bansal M."/>
            <person name="Baxter L."/>
            <person name="Beisel K.W."/>
            <person name="Bersano T."/>
            <person name="Bono H."/>
            <person name="Chalk A.M."/>
            <person name="Chiu K.P."/>
            <person name="Choudhary V."/>
            <person name="Christoffels A."/>
            <person name="Clutterbuck D.R."/>
            <person name="Crowe M.L."/>
            <person name="Dalla E."/>
            <person name="Dalrymple B.P."/>
            <person name="de Bono B."/>
            <person name="Della Gatta G."/>
            <person name="di Bernardo D."/>
            <person name="Down T."/>
            <person name="Engstrom P."/>
            <person name="Fagiolini M."/>
            <person name="Faulkner G."/>
            <person name="Fletcher C.F."/>
            <person name="Fukushima T."/>
            <person name="Furuno M."/>
            <person name="Futaki S."/>
            <person name="Gariboldi M."/>
            <person name="Georgii-Hemming P."/>
            <person name="Gingeras T.R."/>
            <person name="Gojobori T."/>
            <person name="Green R.E."/>
            <person name="Gustincich S."/>
            <person name="Harbers M."/>
            <person name="Hayashi Y."/>
            <person name="Hensch T.K."/>
            <person name="Hirokawa N."/>
            <person name="Hill D."/>
            <person name="Huminiecki L."/>
            <person name="Iacono M."/>
            <person name="Ikeo K."/>
            <person name="Iwama A."/>
            <person name="Ishikawa T."/>
            <person name="Jakt M."/>
            <person name="Kanapin A."/>
            <person name="Katoh M."/>
            <person name="Kawasawa Y."/>
            <person name="Kelso J."/>
            <person name="Kitamura H."/>
            <person name="Kitano H."/>
            <person name="Kollias G."/>
            <person name="Krishnan S.P."/>
            <person name="Kruger A."/>
            <person name="Kummerfeld S.K."/>
            <person name="Kurochkin I.V."/>
            <person name="Lareau L.F."/>
            <person name="Lazarevic D."/>
            <person name="Lipovich L."/>
            <person name="Liu J."/>
            <person name="Liuni S."/>
            <person name="McWilliam S."/>
            <person name="Madan Babu M."/>
            <person name="Madera M."/>
            <person name="Marchionni L."/>
            <person name="Matsuda H."/>
            <person name="Matsuzawa S."/>
            <person name="Miki H."/>
            <person name="Mignone F."/>
            <person name="Miyake S."/>
            <person name="Morris K."/>
            <person name="Mottagui-Tabar S."/>
            <person name="Mulder N."/>
            <person name="Nakano N."/>
            <person name="Nakauchi H."/>
            <person name="Ng P."/>
            <person name="Nilsson R."/>
            <person name="Nishiguchi S."/>
            <person name="Nishikawa S."/>
            <person name="Nori F."/>
            <person name="Ohara O."/>
            <person name="Okazaki Y."/>
            <person name="Orlando V."/>
            <person name="Pang K.C."/>
            <person name="Pavan W.J."/>
            <person name="Pavesi G."/>
            <person name="Pesole G."/>
            <person name="Petrovsky N."/>
            <person name="Piazza S."/>
            <person name="Reed J."/>
            <person name="Reid J.F."/>
            <person name="Ring B.Z."/>
            <person name="Ringwald M."/>
            <person name="Rost B."/>
            <person name="Ruan Y."/>
            <person name="Salzberg S.L."/>
            <person name="Sandelin A."/>
            <person name="Schneider C."/>
            <person name="Schoenbach C."/>
            <person name="Sekiguchi K."/>
            <person name="Semple C.A."/>
            <person name="Seno S."/>
            <person name="Sessa L."/>
            <person name="Sheng Y."/>
            <person name="Shibata Y."/>
            <person name="Shimada H."/>
            <person name="Shimada K."/>
            <person name="Silva D."/>
            <person name="Sinclair B."/>
            <person name="Sperling S."/>
            <person name="Stupka E."/>
            <person name="Sugiura K."/>
            <person name="Sultana R."/>
            <person name="Takenaka Y."/>
            <person name="Taki K."/>
            <person name="Tammoja K."/>
            <person name="Tan S.L."/>
            <person name="Tang S."/>
            <person name="Taylor M.S."/>
            <person name="Tegner J."/>
            <person name="Teichmann S.A."/>
            <person name="Ueda H.R."/>
            <person name="van Nimwegen E."/>
            <person name="Verardo R."/>
            <person name="Wei C.L."/>
            <person name="Yagi K."/>
            <person name="Yamanishi H."/>
            <person name="Zabarovsky E."/>
            <person name="Zhu S."/>
            <person name="Zimmer A."/>
            <person name="Hide W."/>
            <person name="Bult C."/>
            <person name="Grimmond S.M."/>
            <person name="Teasdale R.D."/>
            <person name="Liu E.T."/>
            <person name="Brusic V."/>
            <person name="Quackenbush J."/>
            <person name="Wahlestedt C."/>
            <person name="Mattick J.S."/>
            <person name="Hume D.A."/>
            <person name="Kai C."/>
            <person name="Sasaki D."/>
            <person name="Tomaru Y."/>
            <person name="Fukuda S."/>
            <person name="Kanamori-Katayama M."/>
            <person name="Suzuki M."/>
            <person name="Aoki J."/>
            <person name="Arakawa T."/>
            <person name="Iida J."/>
            <person name="Imamura K."/>
            <person name="Itoh M."/>
            <person name="Kato T."/>
            <person name="Kawaji H."/>
            <person name="Kawagashira N."/>
            <person name="Kawashima T."/>
            <person name="Kojima M."/>
            <person name="Kondo S."/>
            <person name="Konno H."/>
            <person name="Nakano K."/>
            <person name="Ninomiya N."/>
            <person name="Nishio T."/>
            <person name="Okada M."/>
            <person name="Plessy C."/>
            <person name="Shibata K."/>
            <person name="Shiraki T."/>
            <person name="Suzuki S."/>
            <person name="Tagami M."/>
            <person name="Waki K."/>
            <person name="Watahiki A."/>
            <person name="Okamura-Oho Y."/>
            <person name="Suzuki H."/>
            <person name="Kawai J."/>
            <person name="Hayashizaki Y."/>
        </authorList>
    </citation>
    <scope>NUCLEOTIDE SEQUENCE [LARGE SCALE MRNA] OF 1-217 AND 807-1579 (ISOFORM 2)</scope>
    <scope>NUCLEOTIDE SEQUENCE OF 1-135 (ISOFORM 3)</scope>
    <source>
        <strain>C57BL/6J</strain>
        <tissue>Adipose tissue</tissue>
        <tissue>Head</tissue>
        <tissue>Oviduct</tissue>
    </source>
</reference>
<reference key="2">
    <citation type="submission" date="2003-10" db="EMBL/GenBank/DDBJ databases">
        <authorList>
            <consortium name="The MGC Project Team"/>
        </authorList>
    </citation>
    <scope>NUCLEOTIDE SEQUENCE [LARGE SCALE MRNA] OF 164-492</scope>
</reference>
<reference key="3">
    <citation type="journal article" date="2004" name="Genome Res.">
        <title>The status, quality, and expansion of the NIH full-length cDNA project: the Mammalian Gene Collection (MGC).</title>
        <authorList>
            <consortium name="The MGC Project Team"/>
        </authorList>
    </citation>
    <scope>NUCLEOTIDE SEQUENCE [LARGE SCALE MRNA] (ISOFORMS 1; 2 AND 4)</scope>
    <source>
        <strain>C57BL/6J</strain>
        <strain>FVB/N</strain>
        <tissue>Brain</tissue>
        <tissue>Colon</tissue>
        <tissue>Kidney</tissue>
        <tissue>Liver</tissue>
        <tissue>Mammary tumor</tissue>
    </source>
</reference>
<reference key="4">
    <citation type="journal article" date="2006" name="Mol. Cell. Proteomics">
        <title>Comprehensive identification of phosphorylation sites in postsynaptic density preparations.</title>
        <authorList>
            <person name="Trinidad J.C."/>
            <person name="Specht C.G."/>
            <person name="Thalhammer A."/>
            <person name="Schoepfer R."/>
            <person name="Burlingame A.L."/>
        </authorList>
    </citation>
    <scope>IDENTIFICATION BY MASS SPECTROMETRY [LARGE SCALE ANALYSIS]</scope>
    <source>
        <tissue>Brain</tissue>
    </source>
</reference>
<reference key="5">
    <citation type="journal article" date="2007" name="Proc. Natl. Acad. Sci. U.S.A.">
        <title>Large-scale phosphorylation analysis of mouse liver.</title>
        <authorList>
            <person name="Villen J."/>
            <person name="Beausoleil S.A."/>
            <person name="Gerber S.A."/>
            <person name="Gygi S.P."/>
        </authorList>
    </citation>
    <scope>PHOSPHORYLATION [LARGE SCALE ANALYSIS] AT THR-168; SER-267; SER-470 AND SER-472</scope>
    <scope>IDENTIFICATION BY MASS SPECTROMETRY [LARGE SCALE ANALYSIS]</scope>
    <source>
        <tissue>Liver</tissue>
    </source>
</reference>
<reference key="6">
    <citation type="journal article" date="2009" name="Immunity">
        <title>The phagosomal proteome in interferon-gamma-activated macrophages.</title>
        <authorList>
            <person name="Trost M."/>
            <person name="English L."/>
            <person name="Lemieux S."/>
            <person name="Courcelles M."/>
            <person name="Desjardins M."/>
            <person name="Thibault P."/>
        </authorList>
    </citation>
    <scope>PHOSPHORYLATION [LARGE SCALE ANALYSIS] AT SER-472</scope>
    <scope>IDENTIFICATION BY MASS SPECTROMETRY [LARGE SCALE ANALYSIS]</scope>
</reference>
<reference key="7">
    <citation type="journal article" date="2010" name="Cell">
        <title>A tissue-specific atlas of mouse protein phosphorylation and expression.</title>
        <authorList>
            <person name="Huttlin E.L."/>
            <person name="Jedrychowski M.P."/>
            <person name="Elias J.E."/>
            <person name="Goswami T."/>
            <person name="Rad R."/>
            <person name="Beausoleil S.A."/>
            <person name="Villen J."/>
            <person name="Haas W."/>
            <person name="Sowa M.E."/>
            <person name="Gygi S.P."/>
        </authorList>
    </citation>
    <scope>PHOSPHORYLATION [LARGE SCALE ANALYSIS] AT SER-267; SER-436; SER-470 AND SER-472</scope>
    <scope>IDENTIFICATION BY MASS SPECTROMETRY [LARGE SCALE ANALYSIS]</scope>
    <source>
        <tissue>Brain</tissue>
        <tissue>Heart</tissue>
        <tissue>Kidney</tissue>
        <tissue>Liver</tissue>
        <tissue>Lung</tissue>
        <tissue>Pancreas</tissue>
        <tissue>Spleen</tissue>
        <tissue>Testis</tissue>
    </source>
</reference>
<reference key="8">
    <citation type="journal article" date="2014" name="Mol. Cell. Proteomics">
        <title>Immunoaffinity enrichment and mass spectrometry analysis of protein methylation.</title>
        <authorList>
            <person name="Guo A."/>
            <person name="Gu H."/>
            <person name="Zhou J."/>
            <person name="Mulhern D."/>
            <person name="Wang Y."/>
            <person name="Lee K.A."/>
            <person name="Yang V."/>
            <person name="Aguiar M."/>
            <person name="Kornhauser J."/>
            <person name="Jia X."/>
            <person name="Ren J."/>
            <person name="Beausoleil S.A."/>
            <person name="Silva J.C."/>
            <person name="Vemulapalli V."/>
            <person name="Bedford M.T."/>
            <person name="Comb M.J."/>
        </authorList>
    </citation>
    <scope>IDENTIFICATION BY MASS SPECTROMETRY [LARGE SCALE ANALYSIS]</scope>
    <source>
        <tissue>Brain</tissue>
    </source>
</reference>
<reference key="9">
    <citation type="journal article" date="2022" name="Science">
        <title>LLPS of FXR1 drives spermiogenesis by activating translation of stored mRNAs.</title>
        <authorList>
            <person name="Kang J.Y."/>
            <person name="Wen Z."/>
            <person name="Pan D."/>
            <person name="Zhang Y."/>
            <person name="Li Q."/>
            <person name="Zhong A."/>
            <person name="Yu X."/>
            <person name="Wu Y.C."/>
            <person name="Chen Y."/>
            <person name="Zhang X."/>
            <person name="Kou P.C."/>
            <person name="Geng J."/>
            <person name="Wang Y.Y."/>
            <person name="Hua M.M."/>
            <person name="Zong R."/>
            <person name="Li B."/>
            <person name="Shi H.J."/>
            <person name="Li D."/>
            <person name="Fu X.D."/>
            <person name="Li J."/>
            <person name="Nelson D.L."/>
            <person name="Guo X."/>
            <person name="Zhou Y."/>
            <person name="Gou L.T."/>
            <person name="Huang Y."/>
            <person name="Liu M.F."/>
        </authorList>
    </citation>
    <scope>FUNCTION</scope>
    <scope>INTERACTION WITH FXR1</scope>
</reference>
<gene>
    <name type="primary">Eif4g3</name>
</gene>
<name>IF4G3_MOUSE</name>
<comment type="function">
    <text evidence="7">Component of the protein complex eIF4F, which is involved in the recognition of the mRNA cap, ATP-dependent unwinding of 5'-terminal secondary structure and recruitment of mRNA to the ribosome (PubMed:35951695). Functional homolog of EIF4G1 (PubMed:35951695).</text>
</comment>
<comment type="subunit">
    <text evidence="2 7">Interacts with EIF4A, EIF4E, eIF3 and PABPC1 (PubMed:35951695). Part of a complex with EIF4E (PubMed:35951695). eIF4F is a multi-subunit complex, the composition of which varies with external and internal environmental conditions (PubMed:35951695). It is composed of at least EIF4A, EIF4E and EIF4G1/EIF4G3. EIF4G1/EIF4G3 interacts through its C-terminus with the serine/threonine kinases MKNK1, and with MKNK2 (By similarity). Appears to act as a scaffold protein, holding these enzymes in place to phosphorylate eIF4E (By similarity). Non-phosphorylated EIF4EBP1 competes with EIF4G1/EIFG3 to interact with EIF4E; insulin stimulated MAP-kinase (MAPK1 and MAPK3) phosphorylation of EIF4EBP1 causes dissociation of the complex allowing EIF4G1/EIF4G3 to bind and consequent initiation of translation (By similarity). EIF4G1/EIF4G3 interacts with PABPC1 to bring about circularization of the mRNA (By similarity). Interacts with FXR1; promoting translation of FXR1 target mRNAs (PubMed:35951695).</text>
</comment>
<comment type="alternative products">
    <event type="alternative splicing"/>
    <isoform>
        <id>Q80XI3-1</id>
        <name>1</name>
        <sequence type="displayed"/>
    </isoform>
    <isoform>
        <id>Q80XI3-2</id>
        <name>2</name>
        <sequence type="described" ref="VSP_010491"/>
    </isoform>
    <isoform>
        <id>Q80XI3-3</id>
        <name>3</name>
        <sequence type="described" ref="VSP_010490"/>
    </isoform>
    <isoform>
        <id>Q80XI3-4</id>
        <name>4</name>
        <sequence type="described" ref="VSP_026029 VSP_010491"/>
    </isoform>
</comment>
<comment type="similarity">
    <text evidence="10">Belongs to the eukaryotic initiation factor 4G family.</text>
</comment>
<comment type="sequence caution" evidence="10">
    <conflict type="erroneous initiation">
        <sequence resource="EMBL-CDS" id="AAH23898"/>
    </conflict>
    <text>Extended N-terminus.</text>
</comment>
<comment type="sequence caution" evidence="10">
    <conflict type="miscellaneous discrepancy">
        <sequence resource="EMBL-CDS" id="AAH23898"/>
    </conflict>
    <text>Contaminating sequence. Sequence of unknown origin in the N-terminal part.</text>
</comment>
<accession>Q80XI3</accession>
<accession>Q6GQV5</accession>
<accession>Q80Y69</accession>
<accession>Q8BJ68</accession>
<accession>Q8BQF3</accession>
<accession>Q8C6Q3</accession>
<accession>Q8CIH0</accession>
<evidence type="ECO:0000250" key="1">
    <source>
        <dbReference type="UniProtKB" id="O43432"/>
    </source>
</evidence>
<evidence type="ECO:0000250" key="2">
    <source>
        <dbReference type="UniProtKB" id="Q04637"/>
    </source>
</evidence>
<evidence type="ECO:0000255" key="3"/>
<evidence type="ECO:0000255" key="4">
    <source>
        <dbReference type="PROSITE-ProRule" id="PRU00695"/>
    </source>
</evidence>
<evidence type="ECO:0000255" key="5">
    <source>
        <dbReference type="PROSITE-ProRule" id="PRU00698"/>
    </source>
</evidence>
<evidence type="ECO:0000256" key="6">
    <source>
        <dbReference type="SAM" id="MobiDB-lite"/>
    </source>
</evidence>
<evidence type="ECO:0000269" key="7">
    <source>
    </source>
</evidence>
<evidence type="ECO:0000303" key="8">
    <source>
    </source>
</evidence>
<evidence type="ECO:0000303" key="9">
    <source>
    </source>
</evidence>
<evidence type="ECO:0000305" key="10"/>
<evidence type="ECO:0007744" key="11">
    <source>
    </source>
</evidence>
<evidence type="ECO:0007744" key="12">
    <source>
    </source>
</evidence>
<evidence type="ECO:0007744" key="13">
    <source>
    </source>
</evidence>